<dbReference type="EMBL" id="CP000921">
    <property type="protein sequence ID" value="ACO23378.1"/>
    <property type="molecule type" value="Genomic_DNA"/>
</dbReference>
<dbReference type="RefSeq" id="WP_000364990.1">
    <property type="nucleotide sequence ID" value="NC_012469.1"/>
</dbReference>
<dbReference type="SMR" id="C1CTB2"/>
<dbReference type="KEGG" id="snt:SPT_1799"/>
<dbReference type="HOGENOM" id="CLU_180108_0_0_9"/>
<dbReference type="GO" id="GO:0005886">
    <property type="term" value="C:plasma membrane"/>
    <property type="evidence" value="ECO:0007669"/>
    <property type="project" value="UniProtKB-SubCell"/>
</dbReference>
<dbReference type="HAMAP" id="MF_00363">
    <property type="entry name" value="UPF0154"/>
    <property type="match status" value="1"/>
</dbReference>
<dbReference type="InterPro" id="IPR005359">
    <property type="entry name" value="UPF0154"/>
</dbReference>
<dbReference type="Pfam" id="PF03672">
    <property type="entry name" value="UPF0154"/>
    <property type="match status" value="1"/>
</dbReference>
<accession>C1CTB2</accession>
<organism>
    <name type="scientific">Streptococcus pneumoniae (strain Taiwan19F-14)</name>
    <dbReference type="NCBI Taxonomy" id="487213"/>
    <lineage>
        <taxon>Bacteria</taxon>
        <taxon>Bacillati</taxon>
        <taxon>Bacillota</taxon>
        <taxon>Bacilli</taxon>
        <taxon>Lactobacillales</taxon>
        <taxon>Streptococcaceae</taxon>
        <taxon>Streptococcus</taxon>
    </lineage>
</organism>
<reference key="1">
    <citation type="journal article" date="2010" name="Genome Biol.">
        <title>Structure and dynamics of the pan-genome of Streptococcus pneumoniae and closely related species.</title>
        <authorList>
            <person name="Donati C."/>
            <person name="Hiller N.L."/>
            <person name="Tettelin H."/>
            <person name="Muzzi A."/>
            <person name="Croucher N.J."/>
            <person name="Angiuoli S.V."/>
            <person name="Oggioni M."/>
            <person name="Dunning Hotopp J.C."/>
            <person name="Hu F.Z."/>
            <person name="Riley D.R."/>
            <person name="Covacci A."/>
            <person name="Mitchell T.J."/>
            <person name="Bentley S.D."/>
            <person name="Kilian M."/>
            <person name="Ehrlich G.D."/>
            <person name="Rappuoli R."/>
            <person name="Moxon E.R."/>
            <person name="Masignani V."/>
        </authorList>
    </citation>
    <scope>NUCLEOTIDE SEQUENCE [LARGE SCALE GENOMIC DNA]</scope>
    <source>
        <strain>Taiwan19F-14</strain>
    </source>
</reference>
<proteinExistence type="inferred from homology"/>
<protein>
    <recommendedName>
        <fullName evidence="1">UPF0154 protein SPT_1799</fullName>
    </recommendedName>
</protein>
<gene>
    <name type="ordered locus">SPT_1799</name>
</gene>
<keyword id="KW-1003">Cell membrane</keyword>
<keyword id="KW-0472">Membrane</keyword>
<keyword id="KW-0812">Transmembrane</keyword>
<keyword id="KW-1133">Transmembrane helix</keyword>
<feature type="chain" id="PRO_1000197734" description="UPF0154 protein SPT_1799">
    <location>
        <begin position="1"/>
        <end position="82"/>
    </location>
</feature>
<feature type="transmembrane region" description="Helical" evidence="1">
    <location>
        <begin position="5"/>
        <end position="25"/>
    </location>
</feature>
<comment type="subcellular location">
    <subcellularLocation>
        <location evidence="1">Cell membrane</location>
        <topology evidence="1">Single-pass membrane protein</topology>
    </subcellularLocation>
</comment>
<comment type="similarity">
    <text evidence="1">Belongs to the UPF0154 family.</text>
</comment>
<sequence>MDLLLAIVLIVLAFLGGALGGMYLVRKQIEKEFADNPRLNAEAVRTLLSANGQKPSEAKVQQVYHQIIRQQKAALANNKKKK</sequence>
<name>Y1799_STRZT</name>
<evidence type="ECO:0000255" key="1">
    <source>
        <dbReference type="HAMAP-Rule" id="MF_00363"/>
    </source>
</evidence>